<comment type="function">
    <text evidence="2">With S4 and S5 plays an important role in translational accuracy.</text>
</comment>
<comment type="function">
    <text evidence="2">Interacts with and stabilizes bases of the 16S rRNA that are involved in tRNA selection in the A site and with the mRNA backbone. Located at the interface of the 30S and 50S subunits, it traverses the body of the 30S subunit contacting proteins on the other side and probably holding the rRNA structure together. The combined cluster of proteins S8, S12 and S17 appears to hold together the shoulder and platform of the 30S subunit.</text>
</comment>
<comment type="subunit">
    <text evidence="2">Part of the 30S ribosomal subunit. Contacts proteins S8 and S17. May interact with IF1 in the 30S initiation complex.</text>
</comment>
<comment type="similarity">
    <text evidence="2">Belongs to the universal ribosomal protein uS12 family.</text>
</comment>
<evidence type="ECO:0000250" key="1"/>
<evidence type="ECO:0000255" key="2">
    <source>
        <dbReference type="HAMAP-Rule" id="MF_00403"/>
    </source>
</evidence>
<evidence type="ECO:0000256" key="3">
    <source>
        <dbReference type="SAM" id="MobiDB-lite"/>
    </source>
</evidence>
<evidence type="ECO:0000305" key="4"/>
<accession>Q889X6</accession>
<protein>
    <recommendedName>
        <fullName evidence="2">Small ribosomal subunit protein uS12</fullName>
    </recommendedName>
    <alternativeName>
        <fullName evidence="4">30S ribosomal protein S12</fullName>
    </alternativeName>
</protein>
<gene>
    <name evidence="2" type="primary">rpsL</name>
    <name type="ordered locus">PSPTO_0621</name>
</gene>
<dbReference type="EMBL" id="AE016853">
    <property type="protein sequence ID" value="AAO54163.1"/>
    <property type="molecule type" value="Genomic_DNA"/>
</dbReference>
<dbReference type="RefSeq" id="NP_790468.1">
    <property type="nucleotide sequence ID" value="NC_004578.1"/>
</dbReference>
<dbReference type="RefSeq" id="WP_002555494.1">
    <property type="nucleotide sequence ID" value="NC_004578.1"/>
</dbReference>
<dbReference type="SMR" id="Q889X6"/>
<dbReference type="STRING" id="223283.PSPTO_0621"/>
<dbReference type="GeneID" id="97919457"/>
<dbReference type="KEGG" id="pst:PSPTO_0621"/>
<dbReference type="PATRIC" id="fig|223283.9.peg.627"/>
<dbReference type="eggNOG" id="COG0048">
    <property type="taxonomic scope" value="Bacteria"/>
</dbReference>
<dbReference type="HOGENOM" id="CLU_104295_1_2_6"/>
<dbReference type="OrthoDB" id="9802366at2"/>
<dbReference type="PhylomeDB" id="Q889X6"/>
<dbReference type="PRO" id="PR:Q889X6"/>
<dbReference type="Proteomes" id="UP000002515">
    <property type="component" value="Chromosome"/>
</dbReference>
<dbReference type="GO" id="GO:0015935">
    <property type="term" value="C:small ribosomal subunit"/>
    <property type="evidence" value="ECO:0007669"/>
    <property type="project" value="InterPro"/>
</dbReference>
<dbReference type="GO" id="GO:0019843">
    <property type="term" value="F:rRNA binding"/>
    <property type="evidence" value="ECO:0007669"/>
    <property type="project" value="UniProtKB-UniRule"/>
</dbReference>
<dbReference type="GO" id="GO:0003735">
    <property type="term" value="F:structural constituent of ribosome"/>
    <property type="evidence" value="ECO:0007669"/>
    <property type="project" value="InterPro"/>
</dbReference>
<dbReference type="GO" id="GO:0000049">
    <property type="term" value="F:tRNA binding"/>
    <property type="evidence" value="ECO:0007669"/>
    <property type="project" value="UniProtKB-UniRule"/>
</dbReference>
<dbReference type="GO" id="GO:0006412">
    <property type="term" value="P:translation"/>
    <property type="evidence" value="ECO:0007669"/>
    <property type="project" value="UniProtKB-UniRule"/>
</dbReference>
<dbReference type="CDD" id="cd03368">
    <property type="entry name" value="Ribosomal_S12"/>
    <property type="match status" value="1"/>
</dbReference>
<dbReference type="FunFam" id="2.40.50.140:FF:000001">
    <property type="entry name" value="30S ribosomal protein S12"/>
    <property type="match status" value="1"/>
</dbReference>
<dbReference type="Gene3D" id="2.40.50.140">
    <property type="entry name" value="Nucleic acid-binding proteins"/>
    <property type="match status" value="1"/>
</dbReference>
<dbReference type="HAMAP" id="MF_00403_B">
    <property type="entry name" value="Ribosomal_uS12_B"/>
    <property type="match status" value="1"/>
</dbReference>
<dbReference type="InterPro" id="IPR012340">
    <property type="entry name" value="NA-bd_OB-fold"/>
</dbReference>
<dbReference type="InterPro" id="IPR006032">
    <property type="entry name" value="Ribosomal_uS12"/>
</dbReference>
<dbReference type="InterPro" id="IPR005679">
    <property type="entry name" value="Ribosomal_uS12_bac"/>
</dbReference>
<dbReference type="NCBIfam" id="TIGR00981">
    <property type="entry name" value="rpsL_bact"/>
    <property type="match status" value="1"/>
</dbReference>
<dbReference type="PANTHER" id="PTHR11652">
    <property type="entry name" value="30S RIBOSOMAL PROTEIN S12 FAMILY MEMBER"/>
    <property type="match status" value="1"/>
</dbReference>
<dbReference type="Pfam" id="PF00164">
    <property type="entry name" value="Ribosom_S12_S23"/>
    <property type="match status" value="1"/>
</dbReference>
<dbReference type="PIRSF" id="PIRSF002133">
    <property type="entry name" value="Ribosomal_S12/S23"/>
    <property type="match status" value="1"/>
</dbReference>
<dbReference type="PRINTS" id="PR01034">
    <property type="entry name" value="RIBOSOMALS12"/>
</dbReference>
<dbReference type="SUPFAM" id="SSF50249">
    <property type="entry name" value="Nucleic acid-binding proteins"/>
    <property type="match status" value="1"/>
</dbReference>
<dbReference type="PROSITE" id="PS00055">
    <property type="entry name" value="RIBOSOMAL_S12"/>
    <property type="match status" value="1"/>
</dbReference>
<reference key="1">
    <citation type="journal article" date="2003" name="Proc. Natl. Acad. Sci. U.S.A.">
        <title>The complete genome sequence of the Arabidopsis and tomato pathogen Pseudomonas syringae pv. tomato DC3000.</title>
        <authorList>
            <person name="Buell C.R."/>
            <person name="Joardar V."/>
            <person name="Lindeberg M."/>
            <person name="Selengut J."/>
            <person name="Paulsen I.T."/>
            <person name="Gwinn M.L."/>
            <person name="Dodson R.J."/>
            <person name="DeBoy R.T."/>
            <person name="Durkin A.S."/>
            <person name="Kolonay J.F."/>
            <person name="Madupu R."/>
            <person name="Daugherty S.C."/>
            <person name="Brinkac L.M."/>
            <person name="Beanan M.J."/>
            <person name="Haft D.H."/>
            <person name="Nelson W.C."/>
            <person name="Davidsen T.M."/>
            <person name="Zafar N."/>
            <person name="Zhou L."/>
            <person name="Liu J."/>
            <person name="Yuan Q."/>
            <person name="Khouri H.M."/>
            <person name="Fedorova N.B."/>
            <person name="Tran B."/>
            <person name="Russell D."/>
            <person name="Berry K.J."/>
            <person name="Utterback T.R."/>
            <person name="Van Aken S.E."/>
            <person name="Feldblyum T.V."/>
            <person name="D'Ascenzo M."/>
            <person name="Deng W.-L."/>
            <person name="Ramos A.R."/>
            <person name="Alfano J.R."/>
            <person name="Cartinhour S."/>
            <person name="Chatterjee A.K."/>
            <person name="Delaney T.P."/>
            <person name="Lazarowitz S.G."/>
            <person name="Martin G.B."/>
            <person name="Schneider D.J."/>
            <person name="Tang X."/>
            <person name="Bender C.L."/>
            <person name="White O."/>
            <person name="Fraser C.M."/>
            <person name="Collmer A."/>
        </authorList>
    </citation>
    <scope>NUCLEOTIDE SEQUENCE [LARGE SCALE GENOMIC DNA]</scope>
    <source>
        <strain>ATCC BAA-871 / DC3000</strain>
    </source>
</reference>
<keyword id="KW-0488">Methylation</keyword>
<keyword id="KW-1185">Reference proteome</keyword>
<keyword id="KW-0687">Ribonucleoprotein</keyword>
<keyword id="KW-0689">Ribosomal protein</keyword>
<keyword id="KW-0694">RNA-binding</keyword>
<keyword id="KW-0699">rRNA-binding</keyword>
<keyword id="KW-0820">tRNA-binding</keyword>
<name>RS12_PSESM</name>
<sequence>MATINQLVRQPRKRIVEKSDVPALQNCPQRRGVCTRVYTTTPKKPNSALRKVCRVRLTNGFEVSSYIGGEGHNLQEHSVVLIRGGRVKDLPGVRYHTVRGSLDTSGVKGRNQGRSKYGTKKPK</sequence>
<feature type="chain" id="PRO_0000146292" description="Small ribosomal subunit protein uS12">
    <location>
        <begin position="1"/>
        <end position="123"/>
    </location>
</feature>
<feature type="region of interest" description="Disordered" evidence="3">
    <location>
        <begin position="100"/>
        <end position="123"/>
    </location>
</feature>
<feature type="compositionally biased region" description="Basic residues" evidence="3">
    <location>
        <begin position="111"/>
        <end position="123"/>
    </location>
</feature>
<feature type="modified residue" description="3-methylthioaspartic acid" evidence="1">
    <location>
        <position position="89"/>
    </location>
</feature>
<organism>
    <name type="scientific">Pseudomonas syringae pv. tomato (strain ATCC BAA-871 / DC3000)</name>
    <dbReference type="NCBI Taxonomy" id="223283"/>
    <lineage>
        <taxon>Bacteria</taxon>
        <taxon>Pseudomonadati</taxon>
        <taxon>Pseudomonadota</taxon>
        <taxon>Gammaproteobacteria</taxon>
        <taxon>Pseudomonadales</taxon>
        <taxon>Pseudomonadaceae</taxon>
        <taxon>Pseudomonas</taxon>
    </lineage>
</organism>
<proteinExistence type="inferred from homology"/>